<feature type="chain" id="PRO_1000004630" description="Glutamyl-tRNA reductase">
    <location>
        <begin position="1"/>
        <end position="424"/>
    </location>
</feature>
<feature type="active site" description="Nucleophile" evidence="1">
    <location>
        <position position="50"/>
    </location>
</feature>
<feature type="binding site" evidence="1">
    <location>
        <begin position="49"/>
        <end position="52"/>
    </location>
    <ligand>
        <name>substrate</name>
    </ligand>
</feature>
<feature type="binding site" evidence="1">
    <location>
        <position position="105"/>
    </location>
    <ligand>
        <name>substrate</name>
    </ligand>
</feature>
<feature type="binding site" evidence="1">
    <location>
        <begin position="110"/>
        <end position="112"/>
    </location>
    <ligand>
        <name>substrate</name>
    </ligand>
</feature>
<feature type="binding site" evidence="1">
    <location>
        <position position="116"/>
    </location>
    <ligand>
        <name>substrate</name>
    </ligand>
</feature>
<feature type="binding site" evidence="1">
    <location>
        <begin position="185"/>
        <end position="190"/>
    </location>
    <ligand>
        <name>NADP(+)</name>
        <dbReference type="ChEBI" id="CHEBI:58349"/>
    </ligand>
</feature>
<feature type="site" description="Important for activity" evidence="1">
    <location>
        <position position="95"/>
    </location>
</feature>
<dbReference type="EC" id="1.2.1.70" evidence="1"/>
<dbReference type="EMBL" id="CR628336">
    <property type="protein sequence ID" value="CAH13436.1"/>
    <property type="molecule type" value="Genomic_DNA"/>
</dbReference>
<dbReference type="RefSeq" id="WP_015444133.1">
    <property type="nucleotide sequence ID" value="NC_006368.1"/>
</dbReference>
<dbReference type="SMR" id="Q5X2V4"/>
<dbReference type="GeneID" id="57036327"/>
<dbReference type="KEGG" id="lpp:lpp2283"/>
<dbReference type="LegioList" id="lpp2283"/>
<dbReference type="HOGENOM" id="CLU_035113_2_2_6"/>
<dbReference type="UniPathway" id="UPA00251">
    <property type="reaction ID" value="UER00316"/>
</dbReference>
<dbReference type="GO" id="GO:0008883">
    <property type="term" value="F:glutamyl-tRNA reductase activity"/>
    <property type="evidence" value="ECO:0007669"/>
    <property type="project" value="UniProtKB-UniRule"/>
</dbReference>
<dbReference type="GO" id="GO:0050661">
    <property type="term" value="F:NADP binding"/>
    <property type="evidence" value="ECO:0007669"/>
    <property type="project" value="InterPro"/>
</dbReference>
<dbReference type="GO" id="GO:0019353">
    <property type="term" value="P:protoporphyrinogen IX biosynthetic process from glutamate"/>
    <property type="evidence" value="ECO:0007669"/>
    <property type="project" value="TreeGrafter"/>
</dbReference>
<dbReference type="CDD" id="cd05213">
    <property type="entry name" value="NAD_bind_Glutamyl_tRNA_reduct"/>
    <property type="match status" value="1"/>
</dbReference>
<dbReference type="FunFam" id="3.30.460.30:FF:000001">
    <property type="entry name" value="Glutamyl-tRNA reductase"/>
    <property type="match status" value="1"/>
</dbReference>
<dbReference type="FunFam" id="3.40.50.720:FF:000031">
    <property type="entry name" value="Glutamyl-tRNA reductase"/>
    <property type="match status" value="1"/>
</dbReference>
<dbReference type="Gene3D" id="3.30.460.30">
    <property type="entry name" value="Glutamyl-tRNA reductase, N-terminal domain"/>
    <property type="match status" value="1"/>
</dbReference>
<dbReference type="Gene3D" id="3.40.50.720">
    <property type="entry name" value="NAD(P)-binding Rossmann-like Domain"/>
    <property type="match status" value="1"/>
</dbReference>
<dbReference type="HAMAP" id="MF_00087">
    <property type="entry name" value="Glu_tRNA_reductase"/>
    <property type="match status" value="1"/>
</dbReference>
<dbReference type="InterPro" id="IPR000343">
    <property type="entry name" value="4pyrrol_synth_GluRdtase"/>
</dbReference>
<dbReference type="InterPro" id="IPR015896">
    <property type="entry name" value="4pyrrol_synth_GluRdtase_dimer"/>
</dbReference>
<dbReference type="InterPro" id="IPR015895">
    <property type="entry name" value="4pyrrol_synth_GluRdtase_N"/>
</dbReference>
<dbReference type="InterPro" id="IPR036453">
    <property type="entry name" value="GluRdtase_dimer_dom_sf"/>
</dbReference>
<dbReference type="InterPro" id="IPR036343">
    <property type="entry name" value="GluRdtase_N_sf"/>
</dbReference>
<dbReference type="InterPro" id="IPR036291">
    <property type="entry name" value="NAD(P)-bd_dom_sf"/>
</dbReference>
<dbReference type="InterPro" id="IPR006151">
    <property type="entry name" value="Shikm_DH/Glu-tRNA_Rdtase"/>
</dbReference>
<dbReference type="NCBIfam" id="TIGR01035">
    <property type="entry name" value="hemA"/>
    <property type="match status" value="1"/>
</dbReference>
<dbReference type="PANTHER" id="PTHR43013">
    <property type="entry name" value="GLUTAMYL-TRNA REDUCTASE"/>
    <property type="match status" value="1"/>
</dbReference>
<dbReference type="PANTHER" id="PTHR43013:SF1">
    <property type="entry name" value="GLUTAMYL-TRNA REDUCTASE"/>
    <property type="match status" value="1"/>
</dbReference>
<dbReference type="Pfam" id="PF00745">
    <property type="entry name" value="GlutR_dimer"/>
    <property type="match status" value="1"/>
</dbReference>
<dbReference type="Pfam" id="PF05201">
    <property type="entry name" value="GlutR_N"/>
    <property type="match status" value="1"/>
</dbReference>
<dbReference type="Pfam" id="PF01488">
    <property type="entry name" value="Shikimate_DH"/>
    <property type="match status" value="1"/>
</dbReference>
<dbReference type="PIRSF" id="PIRSF000445">
    <property type="entry name" value="4pyrrol_synth_GluRdtase"/>
    <property type="match status" value="1"/>
</dbReference>
<dbReference type="SUPFAM" id="SSF69742">
    <property type="entry name" value="Glutamyl tRNA-reductase catalytic, N-terminal domain"/>
    <property type="match status" value="1"/>
</dbReference>
<dbReference type="SUPFAM" id="SSF69075">
    <property type="entry name" value="Glutamyl tRNA-reductase dimerization domain"/>
    <property type="match status" value="1"/>
</dbReference>
<dbReference type="SUPFAM" id="SSF51735">
    <property type="entry name" value="NAD(P)-binding Rossmann-fold domains"/>
    <property type="match status" value="1"/>
</dbReference>
<proteinExistence type="inferred from homology"/>
<name>HEM1_LEGPA</name>
<comment type="function">
    <text evidence="1">Catalyzes the NADPH-dependent reduction of glutamyl-tRNA(Glu) to glutamate 1-semialdehyde (GSA).</text>
</comment>
<comment type="catalytic activity">
    <reaction evidence="1">
        <text>(S)-4-amino-5-oxopentanoate + tRNA(Glu) + NADP(+) = L-glutamyl-tRNA(Glu) + NADPH + H(+)</text>
        <dbReference type="Rhea" id="RHEA:12344"/>
        <dbReference type="Rhea" id="RHEA-COMP:9663"/>
        <dbReference type="Rhea" id="RHEA-COMP:9680"/>
        <dbReference type="ChEBI" id="CHEBI:15378"/>
        <dbReference type="ChEBI" id="CHEBI:57501"/>
        <dbReference type="ChEBI" id="CHEBI:57783"/>
        <dbReference type="ChEBI" id="CHEBI:58349"/>
        <dbReference type="ChEBI" id="CHEBI:78442"/>
        <dbReference type="ChEBI" id="CHEBI:78520"/>
        <dbReference type="EC" id="1.2.1.70"/>
    </reaction>
</comment>
<comment type="pathway">
    <text evidence="1">Porphyrin-containing compound metabolism; protoporphyrin-IX biosynthesis; 5-aminolevulinate from L-glutamyl-tRNA(Glu): step 1/2.</text>
</comment>
<comment type="subunit">
    <text evidence="1">Homodimer.</text>
</comment>
<comment type="domain">
    <text evidence="1">Possesses an unusual extended V-shaped dimeric structure with each monomer consisting of three distinct domains arranged along a curved 'spinal' alpha-helix. The N-terminal catalytic domain specifically recognizes the glutamate moiety of the substrate. The second domain is the NADPH-binding domain, and the third C-terminal domain is responsible for dimerization.</text>
</comment>
<comment type="miscellaneous">
    <text evidence="1">During catalysis, the active site Cys acts as a nucleophile attacking the alpha-carbonyl group of tRNA-bound glutamate with the formation of a thioester intermediate between enzyme and glutamate, and the concomitant release of tRNA(Glu). The thioester intermediate is finally reduced by direct hydride transfer from NADPH, to form the product GSA.</text>
</comment>
<comment type="similarity">
    <text evidence="1">Belongs to the glutamyl-tRNA reductase family.</text>
</comment>
<organism>
    <name type="scientific">Legionella pneumophila (strain Paris)</name>
    <dbReference type="NCBI Taxonomy" id="297246"/>
    <lineage>
        <taxon>Bacteria</taxon>
        <taxon>Pseudomonadati</taxon>
        <taxon>Pseudomonadota</taxon>
        <taxon>Gammaproteobacteria</taxon>
        <taxon>Legionellales</taxon>
        <taxon>Legionellaceae</taxon>
        <taxon>Legionella</taxon>
    </lineage>
</organism>
<gene>
    <name evidence="1" type="primary">hemA</name>
    <name type="ordered locus">lpp2283</name>
</gene>
<accession>Q5X2V4</accession>
<sequence length="424" mass="47884">MVFVACGLNHKTAPIHVREKVALQPAMQDSLLSSLLDLPEVNEAAILSTCNRTEIYCDTNTPEVLGNWLAHEHQLSEELLSQFLYIHQGKEGIKHTLRVASGLDSMMIGEPQILGQMKQAYQHACRLGTVKTQLRPVFEYIFRASKRIRTRSGIGANPVSIAYAAVQLIGQLFKNYHSLSVFLIGSGETASLVAKYLHQHGVHRFLIASRTLENAQKLAETFGGKTLSIGDIPQYLPLADVVISATACPLPFINKSLVEHALEQRNHAPMFLLDLAVPRDIEGNVNELEQVHLYNVDDLQSMIEKGMDERRNAALQAEQLIESELDNYIRWHRSLRAKDVICDYRNQMHTLAQQELQRALKKISAGQNQQDVLNEFSMRLVNKLTHNPTIGLRQIAWDNREDLLDLARYLFDTTANQSLYEEIS</sequence>
<protein>
    <recommendedName>
        <fullName evidence="1">Glutamyl-tRNA reductase</fullName>
        <shortName evidence="1">GluTR</shortName>
        <ecNumber evidence="1">1.2.1.70</ecNumber>
    </recommendedName>
</protein>
<keyword id="KW-0521">NADP</keyword>
<keyword id="KW-0560">Oxidoreductase</keyword>
<keyword id="KW-0627">Porphyrin biosynthesis</keyword>
<reference key="1">
    <citation type="journal article" date="2004" name="Nat. Genet.">
        <title>Evidence in the Legionella pneumophila genome for exploitation of host cell functions and high genome plasticity.</title>
        <authorList>
            <person name="Cazalet C."/>
            <person name="Rusniok C."/>
            <person name="Brueggemann H."/>
            <person name="Zidane N."/>
            <person name="Magnier A."/>
            <person name="Ma L."/>
            <person name="Tichit M."/>
            <person name="Jarraud S."/>
            <person name="Bouchier C."/>
            <person name="Vandenesch F."/>
            <person name="Kunst F."/>
            <person name="Etienne J."/>
            <person name="Glaser P."/>
            <person name="Buchrieser C."/>
        </authorList>
    </citation>
    <scope>NUCLEOTIDE SEQUENCE [LARGE SCALE GENOMIC DNA]</scope>
    <source>
        <strain>Paris</strain>
    </source>
</reference>
<evidence type="ECO:0000255" key="1">
    <source>
        <dbReference type="HAMAP-Rule" id="MF_00087"/>
    </source>
</evidence>